<keyword id="KW-0004">4Fe-4S</keyword>
<keyword id="KW-0963">Cytoplasm</keyword>
<keyword id="KW-0408">Iron</keyword>
<keyword id="KW-0411">Iron-sulfur</keyword>
<keyword id="KW-0479">Metal-binding</keyword>
<keyword id="KW-1185">Reference proteome</keyword>
<keyword id="KW-0949">S-adenosyl-L-methionine</keyword>
<keyword id="KW-0808">Transferase</keyword>
<reference key="1">
    <citation type="journal article" date="2002" name="Genome Res.">
        <title>A complete sequence of the T. tengcongensis genome.</title>
        <authorList>
            <person name="Bao Q."/>
            <person name="Tian Y."/>
            <person name="Li W."/>
            <person name="Xu Z."/>
            <person name="Xuan Z."/>
            <person name="Hu S."/>
            <person name="Dong W."/>
            <person name="Yang J."/>
            <person name="Chen Y."/>
            <person name="Xue Y."/>
            <person name="Xu Y."/>
            <person name="Lai X."/>
            <person name="Huang L."/>
            <person name="Dong X."/>
            <person name="Ma Y."/>
            <person name="Ling L."/>
            <person name="Tan H."/>
            <person name="Chen R."/>
            <person name="Wang J."/>
            <person name="Yu J."/>
            <person name="Yang H."/>
        </authorList>
    </citation>
    <scope>NUCLEOTIDE SEQUENCE [LARGE SCALE GENOMIC DNA]</scope>
    <source>
        <strain>DSM 15242 / JCM 11007 / NBRC 100824 / MB4</strain>
    </source>
</reference>
<organism>
    <name type="scientific">Caldanaerobacter subterraneus subsp. tengcongensis (strain DSM 15242 / JCM 11007 / NBRC 100824 / MB4)</name>
    <name type="common">Thermoanaerobacter tengcongensis</name>
    <dbReference type="NCBI Taxonomy" id="273068"/>
    <lineage>
        <taxon>Bacteria</taxon>
        <taxon>Bacillati</taxon>
        <taxon>Bacillota</taxon>
        <taxon>Clostridia</taxon>
        <taxon>Thermoanaerobacterales</taxon>
        <taxon>Thermoanaerobacteraceae</taxon>
        <taxon>Caldanaerobacter</taxon>
    </lineage>
</organism>
<proteinExistence type="inferred from homology"/>
<feature type="chain" id="PRO_0000375045" description="Ribosomal protein uS12 methylthiotransferase RimO">
    <location>
        <begin position="1"/>
        <end position="436"/>
    </location>
</feature>
<feature type="domain" description="MTTase N-terminal" evidence="1">
    <location>
        <begin position="2"/>
        <end position="117"/>
    </location>
</feature>
<feature type="domain" description="Radical SAM core" evidence="2">
    <location>
        <begin position="140"/>
        <end position="369"/>
    </location>
</feature>
<feature type="domain" description="TRAM" evidence="1">
    <location>
        <begin position="372"/>
        <end position="436"/>
    </location>
</feature>
<feature type="binding site" evidence="1">
    <location>
        <position position="11"/>
    </location>
    <ligand>
        <name>[4Fe-4S] cluster</name>
        <dbReference type="ChEBI" id="CHEBI:49883"/>
        <label>1</label>
    </ligand>
</feature>
<feature type="binding site" evidence="1">
    <location>
        <position position="47"/>
    </location>
    <ligand>
        <name>[4Fe-4S] cluster</name>
        <dbReference type="ChEBI" id="CHEBI:49883"/>
        <label>1</label>
    </ligand>
</feature>
<feature type="binding site" evidence="1">
    <location>
        <position position="80"/>
    </location>
    <ligand>
        <name>[4Fe-4S] cluster</name>
        <dbReference type="ChEBI" id="CHEBI:49883"/>
        <label>1</label>
    </ligand>
</feature>
<feature type="binding site" evidence="1">
    <location>
        <position position="154"/>
    </location>
    <ligand>
        <name>[4Fe-4S] cluster</name>
        <dbReference type="ChEBI" id="CHEBI:49883"/>
        <label>2</label>
        <note>4Fe-4S-S-AdoMet</note>
    </ligand>
</feature>
<feature type="binding site" evidence="1">
    <location>
        <position position="158"/>
    </location>
    <ligand>
        <name>[4Fe-4S] cluster</name>
        <dbReference type="ChEBI" id="CHEBI:49883"/>
        <label>2</label>
        <note>4Fe-4S-S-AdoMet</note>
    </ligand>
</feature>
<feature type="binding site" evidence="1">
    <location>
        <position position="161"/>
    </location>
    <ligand>
        <name>[4Fe-4S] cluster</name>
        <dbReference type="ChEBI" id="CHEBI:49883"/>
        <label>2</label>
        <note>4Fe-4S-S-AdoMet</note>
    </ligand>
</feature>
<accession>Q8RA52</accession>
<comment type="function">
    <text evidence="1">Catalyzes the methylthiolation of an aspartic acid residue of ribosomal protein uS12.</text>
</comment>
<comment type="catalytic activity">
    <reaction evidence="1">
        <text>L-aspartate(89)-[ribosomal protein uS12]-hydrogen + (sulfur carrier)-SH + AH2 + 2 S-adenosyl-L-methionine = 3-methylsulfanyl-L-aspartate(89)-[ribosomal protein uS12]-hydrogen + (sulfur carrier)-H + 5'-deoxyadenosine + L-methionine + A + S-adenosyl-L-homocysteine + 2 H(+)</text>
        <dbReference type="Rhea" id="RHEA:37087"/>
        <dbReference type="Rhea" id="RHEA-COMP:10460"/>
        <dbReference type="Rhea" id="RHEA-COMP:10461"/>
        <dbReference type="Rhea" id="RHEA-COMP:14737"/>
        <dbReference type="Rhea" id="RHEA-COMP:14739"/>
        <dbReference type="ChEBI" id="CHEBI:13193"/>
        <dbReference type="ChEBI" id="CHEBI:15378"/>
        <dbReference type="ChEBI" id="CHEBI:17319"/>
        <dbReference type="ChEBI" id="CHEBI:17499"/>
        <dbReference type="ChEBI" id="CHEBI:29917"/>
        <dbReference type="ChEBI" id="CHEBI:29961"/>
        <dbReference type="ChEBI" id="CHEBI:57844"/>
        <dbReference type="ChEBI" id="CHEBI:57856"/>
        <dbReference type="ChEBI" id="CHEBI:59789"/>
        <dbReference type="ChEBI" id="CHEBI:64428"/>
        <dbReference type="ChEBI" id="CHEBI:73599"/>
        <dbReference type="EC" id="2.8.4.4"/>
    </reaction>
</comment>
<comment type="cofactor">
    <cofactor evidence="1">
        <name>[4Fe-4S] cluster</name>
        <dbReference type="ChEBI" id="CHEBI:49883"/>
    </cofactor>
    <text evidence="1">Binds 2 [4Fe-4S] clusters. One cluster is coordinated with 3 cysteines and an exchangeable S-adenosyl-L-methionine.</text>
</comment>
<comment type="subcellular location">
    <subcellularLocation>
        <location evidence="1">Cytoplasm</location>
    </subcellularLocation>
</comment>
<comment type="similarity">
    <text evidence="1">Belongs to the methylthiotransferase family. RimO subfamily.</text>
</comment>
<dbReference type="EC" id="2.8.4.4" evidence="1"/>
<dbReference type="EMBL" id="AE008691">
    <property type="protein sequence ID" value="AAM24599.1"/>
    <property type="molecule type" value="Genomic_DNA"/>
</dbReference>
<dbReference type="RefSeq" id="WP_011025665.1">
    <property type="nucleotide sequence ID" value="NC_003869.1"/>
</dbReference>
<dbReference type="SMR" id="Q8RA52"/>
<dbReference type="STRING" id="273068.TTE1377"/>
<dbReference type="KEGG" id="tte:TTE1377"/>
<dbReference type="eggNOG" id="COG0621">
    <property type="taxonomic scope" value="Bacteria"/>
</dbReference>
<dbReference type="HOGENOM" id="CLU_018697_0_1_9"/>
<dbReference type="OrthoDB" id="9805215at2"/>
<dbReference type="Proteomes" id="UP000000555">
    <property type="component" value="Chromosome"/>
</dbReference>
<dbReference type="GO" id="GO:0005829">
    <property type="term" value="C:cytosol"/>
    <property type="evidence" value="ECO:0007669"/>
    <property type="project" value="TreeGrafter"/>
</dbReference>
<dbReference type="GO" id="GO:0051539">
    <property type="term" value="F:4 iron, 4 sulfur cluster binding"/>
    <property type="evidence" value="ECO:0007669"/>
    <property type="project" value="UniProtKB-UniRule"/>
</dbReference>
<dbReference type="GO" id="GO:0035599">
    <property type="term" value="F:aspartic acid methylthiotransferase activity"/>
    <property type="evidence" value="ECO:0007669"/>
    <property type="project" value="TreeGrafter"/>
</dbReference>
<dbReference type="GO" id="GO:0046872">
    <property type="term" value="F:metal ion binding"/>
    <property type="evidence" value="ECO:0007669"/>
    <property type="project" value="UniProtKB-KW"/>
</dbReference>
<dbReference type="GO" id="GO:0103039">
    <property type="term" value="F:protein methylthiotransferase activity"/>
    <property type="evidence" value="ECO:0007669"/>
    <property type="project" value="UniProtKB-EC"/>
</dbReference>
<dbReference type="GO" id="GO:0006400">
    <property type="term" value="P:tRNA modification"/>
    <property type="evidence" value="ECO:0007669"/>
    <property type="project" value="InterPro"/>
</dbReference>
<dbReference type="CDD" id="cd01335">
    <property type="entry name" value="Radical_SAM"/>
    <property type="match status" value="1"/>
</dbReference>
<dbReference type="FunFam" id="3.40.50.12160:FF:000003">
    <property type="entry name" value="CDK5 regulatory subunit-associated protein 1"/>
    <property type="match status" value="1"/>
</dbReference>
<dbReference type="FunFam" id="2.40.50.140:FF:000210">
    <property type="entry name" value="Ribosomal protein S12 methylthiotransferase RimO"/>
    <property type="match status" value="1"/>
</dbReference>
<dbReference type="FunFam" id="3.80.30.20:FF:000001">
    <property type="entry name" value="tRNA-2-methylthio-N(6)-dimethylallyladenosine synthase 2"/>
    <property type="match status" value="1"/>
</dbReference>
<dbReference type="Gene3D" id="3.40.50.12160">
    <property type="entry name" value="Methylthiotransferase, N-terminal domain"/>
    <property type="match status" value="1"/>
</dbReference>
<dbReference type="Gene3D" id="2.40.50.140">
    <property type="entry name" value="Nucleic acid-binding proteins"/>
    <property type="match status" value="1"/>
</dbReference>
<dbReference type="Gene3D" id="3.80.30.20">
    <property type="entry name" value="tm_1862 like domain"/>
    <property type="match status" value="1"/>
</dbReference>
<dbReference type="HAMAP" id="MF_01865">
    <property type="entry name" value="MTTase_RimO"/>
    <property type="match status" value="1"/>
</dbReference>
<dbReference type="InterPro" id="IPR006638">
    <property type="entry name" value="Elp3/MiaA/NifB-like_rSAM"/>
</dbReference>
<dbReference type="InterPro" id="IPR005839">
    <property type="entry name" value="Methylthiotransferase"/>
</dbReference>
<dbReference type="InterPro" id="IPR020612">
    <property type="entry name" value="Methylthiotransferase_CS"/>
</dbReference>
<dbReference type="InterPro" id="IPR013848">
    <property type="entry name" value="Methylthiotransferase_N"/>
</dbReference>
<dbReference type="InterPro" id="IPR038135">
    <property type="entry name" value="Methylthiotransferase_N_sf"/>
</dbReference>
<dbReference type="InterPro" id="IPR012340">
    <property type="entry name" value="NA-bd_OB-fold"/>
</dbReference>
<dbReference type="InterPro" id="IPR005840">
    <property type="entry name" value="Ribosomal_uS12_MeSTrfase_RimO"/>
</dbReference>
<dbReference type="InterPro" id="IPR007197">
    <property type="entry name" value="rSAM"/>
</dbReference>
<dbReference type="InterPro" id="IPR023404">
    <property type="entry name" value="rSAM_horseshoe"/>
</dbReference>
<dbReference type="InterPro" id="IPR002792">
    <property type="entry name" value="TRAM_dom"/>
</dbReference>
<dbReference type="NCBIfam" id="TIGR01125">
    <property type="entry name" value="30S ribosomal protein S12 methylthiotransferase RimO"/>
    <property type="match status" value="1"/>
</dbReference>
<dbReference type="NCBIfam" id="TIGR00089">
    <property type="entry name" value="MiaB/RimO family radical SAM methylthiotransferase"/>
    <property type="match status" value="1"/>
</dbReference>
<dbReference type="PANTHER" id="PTHR43837">
    <property type="entry name" value="RIBOSOMAL PROTEIN S12 METHYLTHIOTRANSFERASE RIMO"/>
    <property type="match status" value="1"/>
</dbReference>
<dbReference type="PANTHER" id="PTHR43837:SF1">
    <property type="entry name" value="RIBOSOMAL PROTEIN US12 METHYLTHIOTRANSFERASE RIMO"/>
    <property type="match status" value="1"/>
</dbReference>
<dbReference type="Pfam" id="PF04055">
    <property type="entry name" value="Radical_SAM"/>
    <property type="match status" value="1"/>
</dbReference>
<dbReference type="Pfam" id="PF18693">
    <property type="entry name" value="TRAM_2"/>
    <property type="match status" value="1"/>
</dbReference>
<dbReference type="Pfam" id="PF00919">
    <property type="entry name" value="UPF0004"/>
    <property type="match status" value="1"/>
</dbReference>
<dbReference type="SFLD" id="SFLDG01082">
    <property type="entry name" value="B12-binding_domain_containing"/>
    <property type="match status" value="1"/>
</dbReference>
<dbReference type="SFLD" id="SFLDS00029">
    <property type="entry name" value="Radical_SAM"/>
    <property type="match status" value="1"/>
</dbReference>
<dbReference type="SFLD" id="SFLDF00274">
    <property type="entry name" value="ribosomal_protein_S12_methylth"/>
    <property type="match status" value="1"/>
</dbReference>
<dbReference type="SMART" id="SM00729">
    <property type="entry name" value="Elp3"/>
    <property type="match status" value="1"/>
</dbReference>
<dbReference type="SUPFAM" id="SSF102114">
    <property type="entry name" value="Radical SAM enzymes"/>
    <property type="match status" value="1"/>
</dbReference>
<dbReference type="PROSITE" id="PS51449">
    <property type="entry name" value="MTTASE_N"/>
    <property type="match status" value="1"/>
</dbReference>
<dbReference type="PROSITE" id="PS01278">
    <property type="entry name" value="MTTASE_RADICAL"/>
    <property type="match status" value="1"/>
</dbReference>
<dbReference type="PROSITE" id="PS51918">
    <property type="entry name" value="RADICAL_SAM"/>
    <property type="match status" value="1"/>
</dbReference>
<dbReference type="PROSITE" id="PS50926">
    <property type="entry name" value="TRAM"/>
    <property type="match status" value="1"/>
</dbReference>
<protein>
    <recommendedName>
        <fullName evidence="1">Ribosomal protein uS12 methylthiotransferase RimO</fullName>
        <shortName evidence="1">uS12 MTTase</shortName>
        <shortName evidence="1">uS12 methylthiotransferase</shortName>
        <ecNumber evidence="1">2.8.4.4</ecNumber>
    </recommendedName>
    <alternativeName>
        <fullName evidence="1">Ribosomal protein uS12 (aspartate-C(3))-methylthiotransferase</fullName>
    </alternativeName>
    <alternativeName>
        <fullName evidence="1">Ribosome maturation factor RimO</fullName>
    </alternativeName>
</protein>
<evidence type="ECO:0000255" key="1">
    <source>
        <dbReference type="HAMAP-Rule" id="MF_01865"/>
    </source>
</evidence>
<evidence type="ECO:0000255" key="2">
    <source>
        <dbReference type="PROSITE-ProRule" id="PRU01266"/>
    </source>
</evidence>
<gene>
    <name evidence="1" type="primary">rimO</name>
    <name type="ordered locus">TTE1377</name>
</gene>
<sequence>MRNVGIISLGCPKNSVDSEKMLALLKEKGYNIVNDEKKADVIIINTCAFIEDAKKESIEYIIQMGELKKKRLKYLIATGCLSERYNKELIKELPELDAVIGTGDFTQIVDVIEEVKKGKKVLKYGHPDLLNDEGIPRILTTPPYYAYLKIAEGCSNACSFCIIPKLRGKYKSRKMENIIEEAQELARKGVKELIIIAQDTTKYGIDLYKKLMLPQLLRELSKIEELKWIRLLYAYPDSVTDELIEEIKNNQKIVKYIDIPLQHSSESVLKRMNRGTTRRKIEEVISKLRSIPGMVMRTTFMVGFPGETEEEFEDLKNFIKEKRFERVGVFTYSREEGTKSYYMKPQIRKKVKLKRQEELMEIQKQISYEFNMSKIGTKLEVLIEGFEDGVYYGRSYMDAPEIDGLVYVRSDKKLFPGDFVTVTVVDAFEYDLVGEY</sequence>
<name>RIMO_CALS4</name>